<protein>
    <recommendedName>
        <fullName>Involucrin</fullName>
    </recommendedName>
</protein>
<dbReference type="EMBL" id="M25313">
    <property type="protein sequence ID" value="AAA35375.1"/>
    <property type="molecule type" value="Genomic_DNA"/>
</dbReference>
<dbReference type="PIR" id="I36911">
    <property type="entry name" value="I36911"/>
</dbReference>
<dbReference type="GO" id="GO:0001533">
    <property type="term" value="C:cornified envelope"/>
    <property type="evidence" value="ECO:0000250"/>
    <property type="project" value="UniProtKB"/>
</dbReference>
<dbReference type="GO" id="GO:0005737">
    <property type="term" value="C:cytoplasm"/>
    <property type="evidence" value="ECO:0007669"/>
    <property type="project" value="UniProtKB-SubCell"/>
</dbReference>
<dbReference type="GO" id="GO:0031424">
    <property type="term" value="P:keratinization"/>
    <property type="evidence" value="ECO:0007669"/>
    <property type="project" value="UniProtKB-KW"/>
</dbReference>
<dbReference type="GO" id="GO:0030216">
    <property type="term" value="P:keratinocyte differentiation"/>
    <property type="evidence" value="ECO:0000250"/>
    <property type="project" value="UniProtKB"/>
</dbReference>
<dbReference type="GO" id="GO:0018149">
    <property type="term" value="P:peptide cross-linking"/>
    <property type="evidence" value="ECO:0000250"/>
    <property type="project" value="UniProtKB"/>
</dbReference>
<dbReference type="GO" id="GO:0010224">
    <property type="term" value="P:response to UV-B"/>
    <property type="evidence" value="ECO:0000250"/>
    <property type="project" value="UniProtKB"/>
</dbReference>
<dbReference type="InterPro" id="IPR019743">
    <property type="entry name" value="Involucrin_CS"/>
</dbReference>
<dbReference type="InterPro" id="IPR019571">
    <property type="entry name" value="Involucrin_N"/>
</dbReference>
<dbReference type="InterPro" id="IPR000354">
    <property type="entry name" value="Involucrin_rpt"/>
</dbReference>
<dbReference type="Pfam" id="PF00904">
    <property type="entry name" value="Involucrin"/>
    <property type="match status" value="21"/>
</dbReference>
<dbReference type="Pfam" id="PF10583">
    <property type="entry name" value="Involucrin_N"/>
    <property type="match status" value="1"/>
</dbReference>
<dbReference type="PROSITE" id="PS00795">
    <property type="entry name" value="INVOLUCRIN"/>
    <property type="match status" value="1"/>
</dbReference>
<sequence>MSQQHTLPVTLPPALSQELLDTVPPPVNTQQEQRKQPAALPPPCQEVPVELPVEGPSKHEEKHMTIVKGAPEQECEQQQQPQEQKLQQQHWEQDEEHQKAENPEQQLKQEKAQREKQQLQGQLEEEKKLLDQQPDHELAKSDEQLGTKKEQLLEFPEQQEGQLKCLEQQEGHLELPEQQEGQLKCLEQQEGHQELPEQQEGQLKHLEQQEGQLKHLEQQEGQVKHLEQQEKQSELPEQQRGQPKYLEQQEGQLKHLEEQKGQLKHLEHQEGQLELPEQVGQPKHLEQLEKQLEHPEQQEGQLKQLEEQEGQVKHLEQQEEQLKHLEQQEGQPKHPEQLEKQLEHPEQQEGQLKQLEEQEGQVKHLEQQEEQLKHLEQQEGQPKHLEQLEKQLEHLEQQEGQLKHLEQREEQLELPEQQVGQSKHLEQEEKQLEHPEQQEGQLKHLGKQEAQLELPEQVGQPKHLEQQEKQLEHPEQQEGQLKPQEQQEGQLKGLEQQERQLEQPVFAPAPGQVQGIQQALPPKGEVLLPVEQQQQKQEVQWQHK</sequence>
<gene>
    <name type="primary">IVL</name>
</gene>
<proteinExistence type="evidence at transcript level"/>
<comment type="function">
    <text>Part of the insoluble cornified cell envelope (CE) of stratified squamous epithelia.</text>
</comment>
<comment type="subunit">
    <text evidence="1">Directly or indirectly cross-linked to cornifelin (CNFN).</text>
</comment>
<comment type="subcellular location">
    <subcellularLocation>
        <location>Cytoplasm</location>
    </subcellularLocation>
    <text>Constituent of the scaffolding of the cornified envelope.</text>
</comment>
<comment type="tissue specificity">
    <text>Keratinocytes of epidermis and other stratified squamous epithelia.</text>
</comment>
<comment type="PTM">
    <text>Substrate of transglutaminase. Specific glutamines or lysines are cross-linked to keratins, desmoplakin and to inter involucrin molecules.</text>
</comment>
<comment type="similarity">
    <text evidence="3">Belongs to the involucrin family.</text>
</comment>
<reference key="1">
    <citation type="journal article" date="1989" name="Mol. Biol. Evol.">
        <title>The involucrin gene of the owl monkey: origin of the early region.</title>
        <authorList>
            <person name="Tseng H."/>
            <person name="Green H."/>
        </authorList>
    </citation>
    <scope>NUCLEOTIDE SEQUENCE [GENOMIC DNA]</scope>
</reference>
<evidence type="ECO:0000250" key="1"/>
<evidence type="ECO:0000256" key="2">
    <source>
        <dbReference type="SAM" id="MobiDB-lite"/>
    </source>
</evidence>
<evidence type="ECO:0000305" key="3"/>
<name>INVO_AOTTR</name>
<feature type="chain" id="PRO_0000159732" description="Involucrin">
    <location>
        <begin position="1"/>
        <end position="544"/>
    </location>
</feature>
<feature type="region of interest" description="Disordered" evidence="2">
    <location>
        <begin position="1"/>
        <end position="520"/>
    </location>
</feature>
<feature type="compositionally biased region" description="Low complexity" evidence="2">
    <location>
        <begin position="76"/>
        <end position="90"/>
    </location>
</feature>
<feature type="compositionally biased region" description="Basic and acidic residues" evidence="2">
    <location>
        <begin position="96"/>
        <end position="117"/>
    </location>
</feature>
<feature type="compositionally biased region" description="Basic and acidic residues" evidence="2">
    <location>
        <begin position="124"/>
        <end position="152"/>
    </location>
</feature>
<feature type="compositionally biased region" description="Basic and acidic residues" evidence="2">
    <location>
        <begin position="202"/>
        <end position="234"/>
    </location>
</feature>
<feature type="compositionally biased region" description="Basic and acidic residues" evidence="2">
    <location>
        <begin position="252"/>
        <end position="271"/>
    </location>
</feature>
<feature type="compositionally biased region" description="Basic and acidic residues" evidence="2">
    <location>
        <begin position="283"/>
        <end position="297"/>
    </location>
</feature>
<feature type="compositionally biased region" description="Basic and acidic residues" evidence="2">
    <location>
        <begin position="304"/>
        <end position="347"/>
    </location>
</feature>
<feature type="compositionally biased region" description="Basic and acidic residues" evidence="2">
    <location>
        <begin position="354"/>
        <end position="411"/>
    </location>
</feature>
<feature type="compositionally biased region" description="Basic and acidic residues" evidence="2">
    <location>
        <begin position="423"/>
        <end position="437"/>
    </location>
</feature>
<feature type="compositionally biased region" description="Basic and acidic residues" evidence="2">
    <location>
        <begin position="462"/>
        <end position="476"/>
    </location>
</feature>
<feature type="compositionally biased region" description="Low complexity" evidence="2">
    <location>
        <begin position="477"/>
        <end position="494"/>
    </location>
</feature>
<accession>P24708</accession>
<keyword id="KW-0963">Cytoplasm</keyword>
<keyword id="KW-0417">Keratinization</keyword>
<keyword id="KW-0677">Repeat</keyword>
<organism>
    <name type="scientific">Aotus trivirgatus</name>
    <name type="common">Three-striped night monkey</name>
    <name type="synonym">Douroucouli</name>
    <dbReference type="NCBI Taxonomy" id="9505"/>
    <lineage>
        <taxon>Eukaryota</taxon>
        <taxon>Metazoa</taxon>
        <taxon>Chordata</taxon>
        <taxon>Craniata</taxon>
        <taxon>Vertebrata</taxon>
        <taxon>Euteleostomi</taxon>
        <taxon>Mammalia</taxon>
        <taxon>Eutheria</taxon>
        <taxon>Euarchontoglires</taxon>
        <taxon>Primates</taxon>
        <taxon>Haplorrhini</taxon>
        <taxon>Platyrrhini</taxon>
        <taxon>Aotidae</taxon>
        <taxon>Aotus</taxon>
    </lineage>
</organism>